<name>YDH5_SCHPO</name>
<feature type="chain" id="PRO_0000057143" description="Probable nudix hydrolase C6G9.05">
    <location>
        <begin position="1"/>
        <end position="285"/>
    </location>
</feature>
<feature type="domain" description="Nudix hydrolase" evidence="2">
    <location>
        <begin position="114"/>
        <end position="254"/>
    </location>
</feature>
<feature type="short sequence motif" description="Nudix box">
    <location>
        <begin position="153"/>
        <end position="175"/>
    </location>
</feature>
<feature type="binding site" evidence="1">
    <location>
        <position position="169"/>
    </location>
    <ligand>
        <name>Mg(2+)</name>
        <dbReference type="ChEBI" id="CHEBI:18420"/>
    </ligand>
</feature>
<feature type="binding site" evidence="1">
    <location>
        <position position="173"/>
    </location>
    <ligand>
        <name>Mg(2+)</name>
        <dbReference type="ChEBI" id="CHEBI:18420"/>
    </ligand>
</feature>
<organism>
    <name type="scientific">Schizosaccharomyces pombe (strain 972 / ATCC 24843)</name>
    <name type="common">Fission yeast</name>
    <dbReference type="NCBI Taxonomy" id="284812"/>
    <lineage>
        <taxon>Eukaryota</taxon>
        <taxon>Fungi</taxon>
        <taxon>Dikarya</taxon>
        <taxon>Ascomycota</taxon>
        <taxon>Taphrinomycotina</taxon>
        <taxon>Schizosaccharomycetes</taxon>
        <taxon>Schizosaccharomycetales</taxon>
        <taxon>Schizosaccharomycetaceae</taxon>
        <taxon>Schizosaccharomyces</taxon>
    </lineage>
</organism>
<accession>Q92350</accession>
<dbReference type="EC" id="3.6.1.-"/>
<dbReference type="EMBL" id="CU329670">
    <property type="protein sequence ID" value="CAB03607.1"/>
    <property type="molecule type" value="Genomic_DNA"/>
</dbReference>
<dbReference type="PIR" id="T39067">
    <property type="entry name" value="T39067"/>
</dbReference>
<dbReference type="RefSeq" id="NP_594114.1">
    <property type="nucleotide sequence ID" value="NM_001019538.2"/>
</dbReference>
<dbReference type="SMR" id="Q92350"/>
<dbReference type="BioGRID" id="278011">
    <property type="interactions" value="2"/>
</dbReference>
<dbReference type="FunCoup" id="Q92350">
    <property type="interactions" value="20"/>
</dbReference>
<dbReference type="STRING" id="284812.Q92350"/>
<dbReference type="PaxDb" id="4896-SPAC6G9.05.1"/>
<dbReference type="EnsemblFungi" id="SPAC6G9.05.1">
    <property type="protein sequence ID" value="SPAC6G9.05.1:pep"/>
    <property type="gene ID" value="SPAC6G9.05"/>
</dbReference>
<dbReference type="PomBase" id="SPAC6G9.05"/>
<dbReference type="VEuPathDB" id="FungiDB:SPAC6G9.05"/>
<dbReference type="eggNOG" id="KOG3069">
    <property type="taxonomic scope" value="Eukaryota"/>
</dbReference>
<dbReference type="HOGENOM" id="CLU_977146_0_0_1"/>
<dbReference type="InParanoid" id="Q92350"/>
<dbReference type="OMA" id="AVILNMY"/>
<dbReference type="PhylomeDB" id="Q92350"/>
<dbReference type="Reactome" id="R-SPO-9033241">
    <property type="pathway name" value="Peroxisomal protein import"/>
</dbReference>
<dbReference type="PRO" id="PR:Q92350"/>
<dbReference type="Proteomes" id="UP000002485">
    <property type="component" value="Chromosome I"/>
</dbReference>
<dbReference type="GO" id="GO:0005739">
    <property type="term" value="C:mitochondrion"/>
    <property type="evidence" value="ECO:0007005"/>
    <property type="project" value="PomBase"/>
</dbReference>
<dbReference type="GO" id="GO:0005777">
    <property type="term" value="C:peroxisome"/>
    <property type="evidence" value="ECO:0000266"/>
    <property type="project" value="PomBase"/>
</dbReference>
<dbReference type="GO" id="GO:0010945">
    <property type="term" value="F:coenzyme A diphosphatase activity"/>
    <property type="evidence" value="ECO:0000250"/>
    <property type="project" value="PomBase"/>
</dbReference>
<dbReference type="GO" id="GO:0000287">
    <property type="term" value="F:magnesium ion binding"/>
    <property type="evidence" value="ECO:0007669"/>
    <property type="project" value="InterPro"/>
</dbReference>
<dbReference type="GO" id="GO:0030145">
    <property type="term" value="F:manganese ion binding"/>
    <property type="evidence" value="ECO:0007669"/>
    <property type="project" value="InterPro"/>
</dbReference>
<dbReference type="GO" id="GO:1990748">
    <property type="term" value="P:cellular detoxification"/>
    <property type="evidence" value="ECO:0000304"/>
    <property type="project" value="PomBase"/>
</dbReference>
<dbReference type="GO" id="GO:0015938">
    <property type="term" value="P:coenzyme A catabolic process"/>
    <property type="evidence" value="ECO:0000318"/>
    <property type="project" value="GO_Central"/>
</dbReference>
<dbReference type="GO" id="GO:0009132">
    <property type="term" value="P:nucleoside diphosphate metabolic process"/>
    <property type="evidence" value="ECO:0007669"/>
    <property type="project" value="InterPro"/>
</dbReference>
<dbReference type="CDD" id="cd03426">
    <property type="entry name" value="NUDIX_CoAse_Nudt7"/>
    <property type="match status" value="1"/>
</dbReference>
<dbReference type="FunFam" id="3.90.79.10:FF:000125">
    <property type="entry name" value="Probable nudix hydrolase C6G9.05"/>
    <property type="match status" value="1"/>
</dbReference>
<dbReference type="Gene3D" id="3.90.79.10">
    <property type="entry name" value="Nucleoside Triphosphate Pyrophosphohydrolase"/>
    <property type="match status" value="1"/>
</dbReference>
<dbReference type="InterPro" id="IPR045121">
    <property type="entry name" value="CoAse"/>
</dbReference>
<dbReference type="InterPro" id="IPR015797">
    <property type="entry name" value="NUDIX_hydrolase-like_dom_sf"/>
</dbReference>
<dbReference type="InterPro" id="IPR000086">
    <property type="entry name" value="NUDIX_hydrolase_dom"/>
</dbReference>
<dbReference type="InterPro" id="IPR000059">
    <property type="entry name" value="NUDIX_hydrolase_NudL_CS"/>
</dbReference>
<dbReference type="PANTHER" id="PTHR12992">
    <property type="entry name" value="NUDIX HYDROLASE"/>
    <property type="match status" value="1"/>
</dbReference>
<dbReference type="PANTHER" id="PTHR12992:SF24">
    <property type="entry name" value="PEROXISOMAL COENZYME A DIPHOSPHATASE NUDT7"/>
    <property type="match status" value="1"/>
</dbReference>
<dbReference type="Pfam" id="PF00293">
    <property type="entry name" value="NUDIX"/>
    <property type="match status" value="1"/>
</dbReference>
<dbReference type="SUPFAM" id="SSF55811">
    <property type="entry name" value="Nudix"/>
    <property type="match status" value="1"/>
</dbReference>
<dbReference type="PROSITE" id="PS51462">
    <property type="entry name" value="NUDIX"/>
    <property type="match status" value="1"/>
</dbReference>
<dbReference type="PROSITE" id="PS01293">
    <property type="entry name" value="NUDIX_COA"/>
    <property type="match status" value="1"/>
</dbReference>
<sequence length="285" mass="32772">MKLKLRWKGHQRFLTRQNSLVGFIWSPLKNTFSKRNSILNNQVCFEAIKYIQRHYFSSQSHHVTYLHQSPLEKLVSNGVVNENGDLTMDSLSHQIYLLHKNRPTLPLKPTNQPTRFASVLMPLVNTSQGASLLLTQRSPNLRSHAGQMCFPGGRVEPSDGSHYYAALRETYEEIGFLPNFFTYLTTFPPLFTRDEKTEIRAYLAFSVQTSLPSLGTGEVKDLFYVPLTSFLNPKHQKISRFRNTDLLYVEFNIDKIPRIWGITAVILNMYLNSICPDALISIPKF</sequence>
<comment type="function">
    <text evidence="1">Probably mediates the hydrolysis of some nucleoside diphosphate derivatives.</text>
</comment>
<comment type="cofactor">
    <cofactor evidence="1">
        <name>Mn(2+)</name>
        <dbReference type="ChEBI" id="CHEBI:29035"/>
    </cofactor>
    <cofactor evidence="1">
        <name>Mg(2+)</name>
        <dbReference type="ChEBI" id="CHEBI:18420"/>
    </cofactor>
</comment>
<comment type="similarity">
    <text evidence="3">Belongs to the Nudix hydrolase family. PCD1 subfamily.</text>
</comment>
<proteinExistence type="inferred from homology"/>
<gene>
    <name type="ORF">SPAC6G9.05</name>
</gene>
<reference key="1">
    <citation type="journal article" date="2002" name="Nature">
        <title>The genome sequence of Schizosaccharomyces pombe.</title>
        <authorList>
            <person name="Wood V."/>
            <person name="Gwilliam R."/>
            <person name="Rajandream M.A."/>
            <person name="Lyne M.H."/>
            <person name="Lyne R."/>
            <person name="Stewart A."/>
            <person name="Sgouros J.G."/>
            <person name="Peat N."/>
            <person name="Hayles J."/>
            <person name="Baker S.G."/>
            <person name="Basham D."/>
            <person name="Bowman S."/>
            <person name="Brooks K."/>
            <person name="Brown D."/>
            <person name="Brown S."/>
            <person name="Chillingworth T."/>
            <person name="Churcher C.M."/>
            <person name="Collins M."/>
            <person name="Connor R."/>
            <person name="Cronin A."/>
            <person name="Davis P."/>
            <person name="Feltwell T."/>
            <person name="Fraser A."/>
            <person name="Gentles S."/>
            <person name="Goble A."/>
            <person name="Hamlin N."/>
            <person name="Harris D.E."/>
            <person name="Hidalgo J."/>
            <person name="Hodgson G."/>
            <person name="Holroyd S."/>
            <person name="Hornsby T."/>
            <person name="Howarth S."/>
            <person name="Huckle E.J."/>
            <person name="Hunt S."/>
            <person name="Jagels K."/>
            <person name="James K.D."/>
            <person name="Jones L."/>
            <person name="Jones M."/>
            <person name="Leather S."/>
            <person name="McDonald S."/>
            <person name="McLean J."/>
            <person name="Mooney P."/>
            <person name="Moule S."/>
            <person name="Mungall K.L."/>
            <person name="Murphy L.D."/>
            <person name="Niblett D."/>
            <person name="Odell C."/>
            <person name="Oliver K."/>
            <person name="O'Neil S."/>
            <person name="Pearson D."/>
            <person name="Quail M.A."/>
            <person name="Rabbinowitsch E."/>
            <person name="Rutherford K.M."/>
            <person name="Rutter S."/>
            <person name="Saunders D."/>
            <person name="Seeger K."/>
            <person name="Sharp S."/>
            <person name="Skelton J."/>
            <person name="Simmonds M.N."/>
            <person name="Squares R."/>
            <person name="Squares S."/>
            <person name="Stevens K."/>
            <person name="Taylor K."/>
            <person name="Taylor R.G."/>
            <person name="Tivey A."/>
            <person name="Walsh S.V."/>
            <person name="Warren T."/>
            <person name="Whitehead S."/>
            <person name="Woodward J.R."/>
            <person name="Volckaert G."/>
            <person name="Aert R."/>
            <person name="Robben J."/>
            <person name="Grymonprez B."/>
            <person name="Weltjens I."/>
            <person name="Vanstreels E."/>
            <person name="Rieger M."/>
            <person name="Schaefer M."/>
            <person name="Mueller-Auer S."/>
            <person name="Gabel C."/>
            <person name="Fuchs M."/>
            <person name="Duesterhoeft A."/>
            <person name="Fritzc C."/>
            <person name="Holzer E."/>
            <person name="Moestl D."/>
            <person name="Hilbert H."/>
            <person name="Borzym K."/>
            <person name="Langer I."/>
            <person name="Beck A."/>
            <person name="Lehrach H."/>
            <person name="Reinhardt R."/>
            <person name="Pohl T.M."/>
            <person name="Eger P."/>
            <person name="Zimmermann W."/>
            <person name="Wedler H."/>
            <person name="Wambutt R."/>
            <person name="Purnelle B."/>
            <person name="Goffeau A."/>
            <person name="Cadieu E."/>
            <person name="Dreano S."/>
            <person name="Gloux S."/>
            <person name="Lelaure V."/>
            <person name="Mottier S."/>
            <person name="Galibert F."/>
            <person name="Aves S.J."/>
            <person name="Xiang Z."/>
            <person name="Hunt C."/>
            <person name="Moore K."/>
            <person name="Hurst S.M."/>
            <person name="Lucas M."/>
            <person name="Rochet M."/>
            <person name="Gaillardin C."/>
            <person name="Tallada V.A."/>
            <person name="Garzon A."/>
            <person name="Thode G."/>
            <person name="Daga R.R."/>
            <person name="Cruzado L."/>
            <person name="Jimenez J."/>
            <person name="Sanchez M."/>
            <person name="del Rey F."/>
            <person name="Benito J."/>
            <person name="Dominguez A."/>
            <person name="Revuelta J.L."/>
            <person name="Moreno S."/>
            <person name="Armstrong J."/>
            <person name="Forsburg S.L."/>
            <person name="Cerutti L."/>
            <person name="Lowe T."/>
            <person name="McCombie W.R."/>
            <person name="Paulsen I."/>
            <person name="Potashkin J."/>
            <person name="Shpakovski G.V."/>
            <person name="Ussery D."/>
            <person name="Barrell B.G."/>
            <person name="Nurse P."/>
        </authorList>
    </citation>
    <scope>NUCLEOTIDE SEQUENCE [LARGE SCALE GENOMIC DNA]</scope>
    <source>
        <strain>972 / ATCC 24843</strain>
    </source>
</reference>
<keyword id="KW-0378">Hydrolase</keyword>
<keyword id="KW-0460">Magnesium</keyword>
<keyword id="KW-0464">Manganese</keyword>
<keyword id="KW-0479">Metal-binding</keyword>
<keyword id="KW-1185">Reference proteome</keyword>
<evidence type="ECO:0000250" key="1"/>
<evidence type="ECO:0000255" key="2">
    <source>
        <dbReference type="PROSITE-ProRule" id="PRU00794"/>
    </source>
</evidence>
<evidence type="ECO:0000305" key="3"/>
<protein>
    <recommendedName>
        <fullName>Probable nudix hydrolase C6G9.05</fullName>
        <ecNumber>3.6.1.-</ecNumber>
    </recommendedName>
</protein>